<reference key="1">
    <citation type="submission" date="2002-12" db="EMBL/GenBank/DDBJ databases">
        <title>Complete genome sequence of Vibrio vulnificus CMCP6.</title>
        <authorList>
            <person name="Rhee J.H."/>
            <person name="Kim S.Y."/>
            <person name="Chung S.S."/>
            <person name="Kim J.J."/>
            <person name="Moon Y.H."/>
            <person name="Jeong H."/>
            <person name="Choy H.E."/>
        </authorList>
    </citation>
    <scope>NUCLEOTIDE SEQUENCE [LARGE SCALE GENOMIC DNA]</scope>
    <source>
        <strain>CMCP6</strain>
    </source>
</reference>
<name>BTUC_VIBVU</name>
<sequence length="331" mass="35694">MELHQLIAHKEKRWRATLLVMLAVLLVLSALYLMVGEVFLSPFSSLSSFEHKLLVDLRLPRLVAAMVIGAALAVSGATLQVLLGNVLAEPGVLGISGGASLAMVIALFLLPVMPTPTVFMLAAIIGALVFTLILVGMARAMHLSTSRMLLVGVALGILSGAFVTWAFYFSDDLSLRQLMYWLMGSIGGASWHHHLVTLVLLPVLVWLCLQGQTLDKLMLGETHAAQLGVDVHKVRWRLILAISILIGCAVALGGIISFVGLVVPHLLRMAFGSENRFLLPLSAFAGATLLVFSDIWARTLLDSAELPLGVMTTTIGAPIFIWMLIRSHDAH</sequence>
<feature type="chain" id="PRO_0000059981" description="Vitamin B12 import system permease protein BtuC">
    <location>
        <begin position="1"/>
        <end position="331"/>
    </location>
</feature>
<feature type="transmembrane region" description="Helical" evidence="1">
    <location>
        <begin position="20"/>
        <end position="42"/>
    </location>
</feature>
<feature type="transmembrane region" description="Helical" evidence="1">
    <location>
        <begin position="62"/>
        <end position="84"/>
    </location>
</feature>
<feature type="transmembrane region" description="Helical" evidence="1">
    <location>
        <begin position="91"/>
        <end position="113"/>
    </location>
</feature>
<feature type="transmembrane region" description="Helical" evidence="1">
    <location>
        <begin position="117"/>
        <end position="136"/>
    </location>
</feature>
<feature type="transmembrane region" description="Helical" evidence="1">
    <location>
        <begin position="148"/>
        <end position="170"/>
    </location>
</feature>
<feature type="transmembrane region" description="Helical" evidence="1">
    <location>
        <begin position="190"/>
        <end position="209"/>
    </location>
</feature>
<feature type="transmembrane region" description="Helical" evidence="1">
    <location>
        <begin position="240"/>
        <end position="262"/>
    </location>
</feature>
<feature type="transmembrane region" description="Helical" evidence="1">
    <location>
        <begin position="277"/>
        <end position="296"/>
    </location>
</feature>
<feature type="transmembrane region" description="Helical" evidence="1">
    <location>
        <begin position="303"/>
        <end position="325"/>
    </location>
</feature>
<keyword id="KW-0997">Cell inner membrane</keyword>
<keyword id="KW-1003">Cell membrane</keyword>
<keyword id="KW-0472">Membrane</keyword>
<keyword id="KW-0812">Transmembrane</keyword>
<keyword id="KW-1133">Transmembrane helix</keyword>
<keyword id="KW-0813">Transport</keyword>
<gene>
    <name evidence="1" type="primary">btuC</name>
    <name type="ordered locus">VV1_2782</name>
</gene>
<organism>
    <name type="scientific">Vibrio vulnificus (strain CMCP6)</name>
    <dbReference type="NCBI Taxonomy" id="216895"/>
    <lineage>
        <taxon>Bacteria</taxon>
        <taxon>Pseudomonadati</taxon>
        <taxon>Pseudomonadota</taxon>
        <taxon>Gammaproteobacteria</taxon>
        <taxon>Vibrionales</taxon>
        <taxon>Vibrionaceae</taxon>
        <taxon>Vibrio</taxon>
    </lineage>
</organism>
<accession>Q8D927</accession>
<dbReference type="EMBL" id="AE016795">
    <property type="protein sequence ID" value="AAO11124.1"/>
    <property type="molecule type" value="Genomic_DNA"/>
</dbReference>
<dbReference type="RefSeq" id="WP_011080618.1">
    <property type="nucleotide sequence ID" value="NC_004459.3"/>
</dbReference>
<dbReference type="SMR" id="Q8D927"/>
<dbReference type="KEGG" id="vvu:VV1_2782"/>
<dbReference type="HOGENOM" id="CLU_013016_0_3_6"/>
<dbReference type="Proteomes" id="UP000002275">
    <property type="component" value="Chromosome 1"/>
</dbReference>
<dbReference type="GO" id="GO:0005886">
    <property type="term" value="C:plasma membrane"/>
    <property type="evidence" value="ECO:0007669"/>
    <property type="project" value="UniProtKB-SubCell"/>
</dbReference>
<dbReference type="GO" id="GO:0090482">
    <property type="term" value="F:vitamin transmembrane transporter activity"/>
    <property type="evidence" value="ECO:0007669"/>
    <property type="project" value="UniProtKB-UniRule"/>
</dbReference>
<dbReference type="GO" id="GO:0015889">
    <property type="term" value="P:cobalamin transport"/>
    <property type="evidence" value="ECO:0007669"/>
    <property type="project" value="UniProtKB-UniRule"/>
</dbReference>
<dbReference type="CDD" id="cd06550">
    <property type="entry name" value="TM_ABC_iron-siderophores_like"/>
    <property type="match status" value="1"/>
</dbReference>
<dbReference type="FunFam" id="1.10.3470.10:FF:000001">
    <property type="entry name" value="Vitamin B12 ABC transporter permease BtuC"/>
    <property type="match status" value="1"/>
</dbReference>
<dbReference type="Gene3D" id="1.10.3470.10">
    <property type="entry name" value="ABC transporter involved in vitamin B12 uptake, BtuC"/>
    <property type="match status" value="1"/>
</dbReference>
<dbReference type="HAMAP" id="MF_01004">
    <property type="entry name" value="BtuC"/>
    <property type="match status" value="1"/>
</dbReference>
<dbReference type="InterPro" id="IPR037294">
    <property type="entry name" value="ABC_BtuC-like"/>
</dbReference>
<dbReference type="InterPro" id="IPR023691">
    <property type="entry name" value="ABC_transptr_BtuC"/>
</dbReference>
<dbReference type="InterPro" id="IPR000522">
    <property type="entry name" value="ABC_transptr_permease_BtuC"/>
</dbReference>
<dbReference type="NCBIfam" id="NF003001">
    <property type="entry name" value="PRK03784.1"/>
    <property type="match status" value="1"/>
</dbReference>
<dbReference type="PANTHER" id="PTHR30472">
    <property type="entry name" value="FERRIC ENTEROBACTIN TRANSPORT SYSTEM PERMEASE PROTEIN"/>
    <property type="match status" value="1"/>
</dbReference>
<dbReference type="PANTHER" id="PTHR30472:SF29">
    <property type="entry name" value="VITAMIN B12 IMPORT SYSTEM PERMEASE PROTEIN BTUC"/>
    <property type="match status" value="1"/>
</dbReference>
<dbReference type="Pfam" id="PF01032">
    <property type="entry name" value="FecCD"/>
    <property type="match status" value="1"/>
</dbReference>
<dbReference type="SUPFAM" id="SSF81345">
    <property type="entry name" value="ABC transporter involved in vitamin B12 uptake, BtuC"/>
    <property type="match status" value="1"/>
</dbReference>
<comment type="function">
    <text evidence="1">Part of the ABC transporter complex BtuCDF involved in vitamin B12 import. Involved in the translocation of the substrate across the membrane.</text>
</comment>
<comment type="subunit">
    <text evidence="1">The complex is composed of two ATP-binding proteins (BtuD), two transmembrane proteins (BtuC) and a solute-binding protein (BtuF).</text>
</comment>
<comment type="subcellular location">
    <subcellularLocation>
        <location evidence="1">Cell inner membrane</location>
        <topology evidence="1">Multi-pass membrane protein</topology>
    </subcellularLocation>
</comment>
<comment type="similarity">
    <text evidence="1">Belongs to the binding-protein-dependent transport system permease family. FecCD subfamily.</text>
</comment>
<protein>
    <recommendedName>
        <fullName evidence="1">Vitamin B12 import system permease protein BtuC</fullName>
    </recommendedName>
</protein>
<proteinExistence type="inferred from homology"/>
<evidence type="ECO:0000255" key="1">
    <source>
        <dbReference type="HAMAP-Rule" id="MF_01004"/>
    </source>
</evidence>